<proteinExistence type="inferred from homology"/>
<accession>Q9CHB8</accession>
<dbReference type="EC" id="2.7.6.1" evidence="1"/>
<dbReference type="EMBL" id="AE005176">
    <property type="protein sequence ID" value="AAK04912.1"/>
    <property type="molecule type" value="Genomic_DNA"/>
</dbReference>
<dbReference type="PIR" id="F86726">
    <property type="entry name" value="F86726"/>
</dbReference>
<dbReference type="RefSeq" id="NP_266970.1">
    <property type="nucleotide sequence ID" value="NC_002662.1"/>
</dbReference>
<dbReference type="RefSeq" id="WP_010905576.1">
    <property type="nucleotide sequence ID" value="NC_002662.1"/>
</dbReference>
<dbReference type="SMR" id="Q9CHB8"/>
<dbReference type="PaxDb" id="272623-L25614"/>
<dbReference type="EnsemblBacteria" id="AAK04912">
    <property type="protein sequence ID" value="AAK04912"/>
    <property type="gene ID" value="L25614"/>
</dbReference>
<dbReference type="KEGG" id="lla:L25614"/>
<dbReference type="PATRIC" id="fig|272623.7.peg.870"/>
<dbReference type="eggNOG" id="COG0462">
    <property type="taxonomic scope" value="Bacteria"/>
</dbReference>
<dbReference type="HOGENOM" id="CLU_033546_1_0_9"/>
<dbReference type="OrthoDB" id="9777067at2"/>
<dbReference type="UniPathway" id="UPA00087">
    <property type="reaction ID" value="UER00172"/>
</dbReference>
<dbReference type="Proteomes" id="UP000002196">
    <property type="component" value="Chromosome"/>
</dbReference>
<dbReference type="GO" id="GO:0005737">
    <property type="term" value="C:cytoplasm"/>
    <property type="evidence" value="ECO:0007669"/>
    <property type="project" value="UniProtKB-SubCell"/>
</dbReference>
<dbReference type="GO" id="GO:0002189">
    <property type="term" value="C:ribose phosphate diphosphokinase complex"/>
    <property type="evidence" value="ECO:0007669"/>
    <property type="project" value="TreeGrafter"/>
</dbReference>
<dbReference type="GO" id="GO:0005524">
    <property type="term" value="F:ATP binding"/>
    <property type="evidence" value="ECO:0007669"/>
    <property type="project" value="UniProtKB-KW"/>
</dbReference>
<dbReference type="GO" id="GO:0016301">
    <property type="term" value="F:kinase activity"/>
    <property type="evidence" value="ECO:0007669"/>
    <property type="project" value="UniProtKB-KW"/>
</dbReference>
<dbReference type="GO" id="GO:0000287">
    <property type="term" value="F:magnesium ion binding"/>
    <property type="evidence" value="ECO:0007669"/>
    <property type="project" value="UniProtKB-UniRule"/>
</dbReference>
<dbReference type="GO" id="GO:0004749">
    <property type="term" value="F:ribose phosphate diphosphokinase activity"/>
    <property type="evidence" value="ECO:0007669"/>
    <property type="project" value="UniProtKB-UniRule"/>
</dbReference>
<dbReference type="GO" id="GO:0006015">
    <property type="term" value="P:5-phosphoribose 1-diphosphate biosynthetic process"/>
    <property type="evidence" value="ECO:0007669"/>
    <property type="project" value="UniProtKB-UniRule"/>
</dbReference>
<dbReference type="GO" id="GO:0006164">
    <property type="term" value="P:purine nucleotide biosynthetic process"/>
    <property type="evidence" value="ECO:0007669"/>
    <property type="project" value="TreeGrafter"/>
</dbReference>
<dbReference type="GO" id="GO:0009156">
    <property type="term" value="P:ribonucleoside monophosphate biosynthetic process"/>
    <property type="evidence" value="ECO:0007669"/>
    <property type="project" value="InterPro"/>
</dbReference>
<dbReference type="CDD" id="cd06223">
    <property type="entry name" value="PRTases_typeI"/>
    <property type="match status" value="1"/>
</dbReference>
<dbReference type="FunFam" id="3.40.50.2020:FF:000001">
    <property type="entry name" value="Ribose-phosphate pyrophosphokinase"/>
    <property type="match status" value="1"/>
</dbReference>
<dbReference type="Gene3D" id="3.40.50.2020">
    <property type="match status" value="2"/>
</dbReference>
<dbReference type="HAMAP" id="MF_00583_B">
    <property type="entry name" value="RibP_PPkinase_B"/>
    <property type="match status" value="1"/>
</dbReference>
<dbReference type="InterPro" id="IPR000842">
    <property type="entry name" value="PRib_PP_synth_CS"/>
</dbReference>
<dbReference type="InterPro" id="IPR029099">
    <property type="entry name" value="Pribosyltran_N"/>
</dbReference>
<dbReference type="InterPro" id="IPR000836">
    <property type="entry name" value="PRibTrfase_dom"/>
</dbReference>
<dbReference type="InterPro" id="IPR029057">
    <property type="entry name" value="PRTase-like"/>
</dbReference>
<dbReference type="InterPro" id="IPR005946">
    <property type="entry name" value="Rib-P_diPkinase"/>
</dbReference>
<dbReference type="InterPro" id="IPR037515">
    <property type="entry name" value="Rib-P_diPkinase_bac"/>
</dbReference>
<dbReference type="NCBIfam" id="NF002320">
    <property type="entry name" value="PRK01259.1"/>
    <property type="match status" value="1"/>
</dbReference>
<dbReference type="NCBIfam" id="NF002618">
    <property type="entry name" value="PRK02269.1"/>
    <property type="match status" value="1"/>
</dbReference>
<dbReference type="NCBIfam" id="TIGR01251">
    <property type="entry name" value="ribP_PPkin"/>
    <property type="match status" value="1"/>
</dbReference>
<dbReference type="PANTHER" id="PTHR10210">
    <property type="entry name" value="RIBOSE-PHOSPHATE DIPHOSPHOKINASE FAMILY MEMBER"/>
    <property type="match status" value="1"/>
</dbReference>
<dbReference type="PANTHER" id="PTHR10210:SF41">
    <property type="entry name" value="RIBOSE-PHOSPHATE PYROPHOSPHOKINASE 1, CHLOROPLASTIC"/>
    <property type="match status" value="1"/>
</dbReference>
<dbReference type="Pfam" id="PF14572">
    <property type="entry name" value="Pribosyl_synth"/>
    <property type="match status" value="1"/>
</dbReference>
<dbReference type="Pfam" id="PF13793">
    <property type="entry name" value="Pribosyltran_N"/>
    <property type="match status" value="1"/>
</dbReference>
<dbReference type="SMART" id="SM01400">
    <property type="entry name" value="Pribosyltran_N"/>
    <property type="match status" value="1"/>
</dbReference>
<dbReference type="SUPFAM" id="SSF53271">
    <property type="entry name" value="PRTase-like"/>
    <property type="match status" value="1"/>
</dbReference>
<dbReference type="PROSITE" id="PS00114">
    <property type="entry name" value="PRPP_SYNTHASE"/>
    <property type="match status" value="1"/>
</dbReference>
<evidence type="ECO:0000255" key="1">
    <source>
        <dbReference type="HAMAP-Rule" id="MF_00583"/>
    </source>
</evidence>
<keyword id="KW-0067">ATP-binding</keyword>
<keyword id="KW-0963">Cytoplasm</keyword>
<keyword id="KW-0418">Kinase</keyword>
<keyword id="KW-0460">Magnesium</keyword>
<keyword id="KW-0479">Metal-binding</keyword>
<keyword id="KW-0545">Nucleotide biosynthesis</keyword>
<keyword id="KW-0547">Nucleotide-binding</keyword>
<keyword id="KW-1185">Reference proteome</keyword>
<keyword id="KW-0808">Transferase</keyword>
<protein>
    <recommendedName>
        <fullName evidence="1">Ribose-phosphate pyrophosphokinase 1</fullName>
        <shortName evidence="1">RPPK 1</shortName>
        <ecNumber evidence="1">2.7.6.1</ecNumber>
    </recommendedName>
    <alternativeName>
        <fullName evidence="1">5-phospho-D-ribosyl alpha-1-diphosphate synthase 1</fullName>
    </alternativeName>
    <alternativeName>
        <fullName evidence="1">Phosphoribosyl diphosphate synthase 1</fullName>
    </alternativeName>
    <alternativeName>
        <fullName evidence="1">Phosphoribosyl pyrophosphate synthase 1</fullName>
        <shortName evidence="1">P-Rib-PP synthase 1</shortName>
        <shortName evidence="1">PRPP synthase 1</shortName>
        <shortName evidence="1">PRPPase 1</shortName>
    </alternativeName>
</protein>
<feature type="chain" id="PRO_0000141146" description="Ribose-phosphate pyrophosphokinase 1">
    <location>
        <begin position="1"/>
        <end position="324"/>
    </location>
</feature>
<feature type="active site" evidence="1">
    <location>
        <position position="197"/>
    </location>
</feature>
<feature type="binding site" evidence="1">
    <location>
        <begin position="39"/>
        <end position="41"/>
    </location>
    <ligand>
        <name>ATP</name>
        <dbReference type="ChEBI" id="CHEBI:30616"/>
    </ligand>
</feature>
<feature type="binding site" evidence="1">
    <location>
        <begin position="98"/>
        <end position="99"/>
    </location>
    <ligand>
        <name>ATP</name>
        <dbReference type="ChEBI" id="CHEBI:30616"/>
    </ligand>
</feature>
<feature type="binding site" evidence="1">
    <location>
        <position position="132"/>
    </location>
    <ligand>
        <name>Mg(2+)</name>
        <dbReference type="ChEBI" id="CHEBI:18420"/>
        <label>1</label>
    </ligand>
</feature>
<feature type="binding site" evidence="1">
    <location>
        <position position="174"/>
    </location>
    <ligand>
        <name>Mg(2+)</name>
        <dbReference type="ChEBI" id="CHEBI:18420"/>
        <label>2</label>
    </ligand>
</feature>
<feature type="binding site" evidence="1">
    <location>
        <position position="199"/>
    </location>
    <ligand>
        <name>D-ribose 5-phosphate</name>
        <dbReference type="ChEBI" id="CHEBI:78346"/>
    </ligand>
</feature>
<feature type="binding site" evidence="1">
    <location>
        <position position="223"/>
    </location>
    <ligand>
        <name>D-ribose 5-phosphate</name>
        <dbReference type="ChEBI" id="CHEBI:78346"/>
    </ligand>
</feature>
<feature type="binding site" evidence="1">
    <location>
        <begin position="227"/>
        <end position="231"/>
    </location>
    <ligand>
        <name>D-ribose 5-phosphate</name>
        <dbReference type="ChEBI" id="CHEBI:78346"/>
    </ligand>
</feature>
<organism>
    <name type="scientific">Lactococcus lactis subsp. lactis (strain IL1403)</name>
    <name type="common">Streptococcus lactis</name>
    <dbReference type="NCBI Taxonomy" id="272623"/>
    <lineage>
        <taxon>Bacteria</taxon>
        <taxon>Bacillati</taxon>
        <taxon>Bacillota</taxon>
        <taxon>Bacilli</taxon>
        <taxon>Lactobacillales</taxon>
        <taxon>Streptococcaceae</taxon>
        <taxon>Lactococcus</taxon>
    </lineage>
</organism>
<comment type="function">
    <text evidence="1">Involved in the biosynthesis of the central metabolite phospho-alpha-D-ribosyl-1-pyrophosphate (PRPP) via the transfer of pyrophosphoryl group from ATP to 1-hydroxyl of ribose-5-phosphate (Rib-5-P).</text>
</comment>
<comment type="catalytic activity">
    <reaction evidence="1">
        <text>D-ribose 5-phosphate + ATP = 5-phospho-alpha-D-ribose 1-diphosphate + AMP + H(+)</text>
        <dbReference type="Rhea" id="RHEA:15609"/>
        <dbReference type="ChEBI" id="CHEBI:15378"/>
        <dbReference type="ChEBI" id="CHEBI:30616"/>
        <dbReference type="ChEBI" id="CHEBI:58017"/>
        <dbReference type="ChEBI" id="CHEBI:78346"/>
        <dbReference type="ChEBI" id="CHEBI:456215"/>
        <dbReference type="EC" id="2.7.6.1"/>
    </reaction>
</comment>
<comment type="cofactor">
    <cofactor evidence="1">
        <name>Mg(2+)</name>
        <dbReference type="ChEBI" id="CHEBI:18420"/>
    </cofactor>
    <text evidence="1">Binds 2 Mg(2+) ions per subunit.</text>
</comment>
<comment type="pathway">
    <text evidence="1">Metabolic intermediate biosynthesis; 5-phospho-alpha-D-ribose 1-diphosphate biosynthesis; 5-phospho-alpha-D-ribose 1-diphosphate from D-ribose 5-phosphate (route I): step 1/1.</text>
</comment>
<comment type="subunit">
    <text evidence="1">Homohexamer.</text>
</comment>
<comment type="subcellular location">
    <subcellularLocation>
        <location evidence="1">Cytoplasm</location>
    </subcellularLocation>
</comment>
<comment type="similarity">
    <text evidence="1">Belongs to the ribose-phosphate pyrophosphokinase family. Class I subfamily.</text>
</comment>
<sequence length="324" mass="35545">MSYSNLKLFSLSSNHELAQKVAKEIGIELGKVSVGAHSDGETVVHIDESVRGDHVFILQSTSDPVNDNLMELLIMMDALRRASAASINIVLPYYGYARQDRKARAREPITSKLVANMLQIAGADRLITFDLHAPQIQGFFNIPVDHLMGSPLIAEYFRRQLVSAGDDIVVVSPDHGGVGRARKLANFLKAPLSIIDKRRPRANVAEIMNIIGDVQGKKCILIDDMIDTAGTITLAANALKELGATEVYASCTHAVLSGPAIERINNSAITKLVVLDTIEMPEERQSEKIVQLSIAHLLADAIIRIHERRPLSPLFELHLPSEQI</sequence>
<name>KPRS1_LACLA</name>
<gene>
    <name evidence="1" type="primary">prs1</name>
    <name type="synonym">prsA</name>
    <name type="ordered locus">LL0814</name>
    <name type="ORF">L25614</name>
</gene>
<reference key="1">
    <citation type="journal article" date="2001" name="Genome Res.">
        <title>The complete genome sequence of the lactic acid bacterium Lactococcus lactis ssp. lactis IL1403.</title>
        <authorList>
            <person name="Bolotin A."/>
            <person name="Wincker P."/>
            <person name="Mauger S."/>
            <person name="Jaillon O."/>
            <person name="Malarme K."/>
            <person name="Weissenbach J."/>
            <person name="Ehrlich S.D."/>
            <person name="Sorokin A."/>
        </authorList>
    </citation>
    <scope>NUCLEOTIDE SEQUENCE [LARGE SCALE GENOMIC DNA]</scope>
    <source>
        <strain>IL1403</strain>
    </source>
</reference>